<gene>
    <name evidence="1" type="primary">pgk</name>
    <name type="ordered locus">Suden_1753</name>
</gene>
<name>PGK_SULDN</name>
<feature type="chain" id="PRO_1000009665" description="Phosphoglycerate kinase">
    <location>
        <begin position="1"/>
        <end position="399"/>
    </location>
</feature>
<feature type="binding site" evidence="1">
    <location>
        <begin position="21"/>
        <end position="23"/>
    </location>
    <ligand>
        <name>substrate</name>
    </ligand>
</feature>
<feature type="binding site" evidence="1">
    <location>
        <position position="37"/>
    </location>
    <ligand>
        <name>substrate</name>
    </ligand>
</feature>
<feature type="binding site" evidence="1">
    <location>
        <begin position="60"/>
        <end position="63"/>
    </location>
    <ligand>
        <name>substrate</name>
    </ligand>
</feature>
<feature type="binding site" evidence="1">
    <location>
        <position position="119"/>
    </location>
    <ligand>
        <name>substrate</name>
    </ligand>
</feature>
<feature type="binding site" evidence="1">
    <location>
        <position position="152"/>
    </location>
    <ligand>
        <name>substrate</name>
    </ligand>
</feature>
<feature type="binding site" evidence="1">
    <location>
        <position position="205"/>
    </location>
    <ligand>
        <name>ATP</name>
        <dbReference type="ChEBI" id="CHEBI:30616"/>
    </ligand>
</feature>
<feature type="binding site" evidence="1">
    <location>
        <position position="296"/>
    </location>
    <ligand>
        <name>ATP</name>
        <dbReference type="ChEBI" id="CHEBI:30616"/>
    </ligand>
</feature>
<feature type="binding site" evidence="1">
    <location>
        <position position="327"/>
    </location>
    <ligand>
        <name>ATP</name>
        <dbReference type="ChEBI" id="CHEBI:30616"/>
    </ligand>
</feature>
<feature type="binding site" evidence="1">
    <location>
        <begin position="353"/>
        <end position="356"/>
    </location>
    <ligand>
        <name>ATP</name>
        <dbReference type="ChEBI" id="CHEBI:30616"/>
    </ligand>
</feature>
<keyword id="KW-0067">ATP-binding</keyword>
<keyword id="KW-0963">Cytoplasm</keyword>
<keyword id="KW-0324">Glycolysis</keyword>
<keyword id="KW-0418">Kinase</keyword>
<keyword id="KW-0547">Nucleotide-binding</keyword>
<keyword id="KW-1185">Reference proteome</keyword>
<keyword id="KW-0808">Transferase</keyword>
<accession>Q30PQ4</accession>
<organism>
    <name type="scientific">Sulfurimonas denitrificans (strain ATCC 33889 / DSM 1251)</name>
    <name type="common">Thiomicrospira denitrificans (strain ATCC 33889 / DSM 1251)</name>
    <dbReference type="NCBI Taxonomy" id="326298"/>
    <lineage>
        <taxon>Bacteria</taxon>
        <taxon>Pseudomonadati</taxon>
        <taxon>Campylobacterota</taxon>
        <taxon>Epsilonproteobacteria</taxon>
        <taxon>Campylobacterales</taxon>
        <taxon>Sulfurimonadaceae</taxon>
        <taxon>Sulfurimonas</taxon>
    </lineage>
</organism>
<sequence>MELLNIKNLDLAGKKVFIRCDFNVPMDEFGNISDDRRIRSAVSTINYCLDQECAVILASHLGRPEGEVVDKYSLIPIARRIQHLLRREVDLASDVVGEDALKRASELKSGQVLMLENLRYEAGETKNDKELSKKLASMADFYINDAFGVSHRAHASVEGITHFFDDKHKAAGFLLQKEIDFLGKIIQNPVRPFAAIVGGSKVSGKLEALINLLPRVDKVLIGGGMAFTFLKKLGYDIGASLVEDDLLEEAGRIMDEAKKLGVKFYLPVDVVVADKFSEDAISKIVSYQEIPPLWMGLDIGPATVRLYGEVLSDVQTVLWNGPMGVYEMDKFARGSNKIAHFVADSYATTIVGGGDTADLVQRIGVDDEMTFISTGGGASLELLEGKILPGVASLIRKKG</sequence>
<proteinExistence type="inferred from homology"/>
<comment type="catalytic activity">
    <reaction evidence="1">
        <text>(2R)-3-phosphoglycerate + ATP = (2R)-3-phospho-glyceroyl phosphate + ADP</text>
        <dbReference type="Rhea" id="RHEA:14801"/>
        <dbReference type="ChEBI" id="CHEBI:30616"/>
        <dbReference type="ChEBI" id="CHEBI:57604"/>
        <dbReference type="ChEBI" id="CHEBI:58272"/>
        <dbReference type="ChEBI" id="CHEBI:456216"/>
        <dbReference type="EC" id="2.7.2.3"/>
    </reaction>
</comment>
<comment type="pathway">
    <text evidence="1">Carbohydrate degradation; glycolysis; pyruvate from D-glyceraldehyde 3-phosphate: step 2/5.</text>
</comment>
<comment type="subunit">
    <text evidence="1">Monomer.</text>
</comment>
<comment type="subcellular location">
    <subcellularLocation>
        <location evidence="1">Cytoplasm</location>
    </subcellularLocation>
</comment>
<comment type="similarity">
    <text evidence="1">Belongs to the phosphoglycerate kinase family.</text>
</comment>
<reference key="1">
    <citation type="journal article" date="2008" name="Appl. Environ. Microbiol.">
        <title>Genome of the epsilonproteobacterial chemolithoautotroph Sulfurimonas denitrificans.</title>
        <authorList>
            <person name="Sievert S.M."/>
            <person name="Scott K.M."/>
            <person name="Klotz M.G."/>
            <person name="Chain P.S.G."/>
            <person name="Hauser L.J."/>
            <person name="Hemp J."/>
            <person name="Huegler M."/>
            <person name="Land M."/>
            <person name="Lapidus A."/>
            <person name="Larimer F.W."/>
            <person name="Lucas S."/>
            <person name="Malfatti S.A."/>
            <person name="Meyer F."/>
            <person name="Paulsen I.T."/>
            <person name="Ren Q."/>
            <person name="Simon J."/>
            <person name="Bailey K."/>
            <person name="Diaz E."/>
            <person name="Fitzpatrick K.A."/>
            <person name="Glover B."/>
            <person name="Gwatney N."/>
            <person name="Korajkic A."/>
            <person name="Long A."/>
            <person name="Mobberley J.M."/>
            <person name="Pantry S.N."/>
            <person name="Pazder G."/>
            <person name="Peterson S."/>
            <person name="Quintanilla J.D."/>
            <person name="Sprinkle R."/>
            <person name="Stephens J."/>
            <person name="Thomas P."/>
            <person name="Vaughn R."/>
            <person name="Weber M.J."/>
            <person name="Wooten L.L."/>
        </authorList>
    </citation>
    <scope>NUCLEOTIDE SEQUENCE [LARGE SCALE GENOMIC DNA]</scope>
    <source>
        <strain>ATCC 33889 / DSM 1251</strain>
    </source>
</reference>
<dbReference type="EC" id="2.7.2.3" evidence="1"/>
<dbReference type="EMBL" id="CP000153">
    <property type="protein sequence ID" value="ABB45027.1"/>
    <property type="molecule type" value="Genomic_DNA"/>
</dbReference>
<dbReference type="RefSeq" id="WP_011373368.1">
    <property type="nucleotide sequence ID" value="NC_007575.1"/>
</dbReference>
<dbReference type="SMR" id="Q30PQ4"/>
<dbReference type="STRING" id="326298.Suden_1753"/>
<dbReference type="KEGG" id="tdn:Suden_1753"/>
<dbReference type="eggNOG" id="COG0126">
    <property type="taxonomic scope" value="Bacteria"/>
</dbReference>
<dbReference type="HOGENOM" id="CLU_025427_0_2_7"/>
<dbReference type="OrthoDB" id="9808460at2"/>
<dbReference type="UniPathway" id="UPA00109">
    <property type="reaction ID" value="UER00185"/>
</dbReference>
<dbReference type="Proteomes" id="UP000002714">
    <property type="component" value="Chromosome"/>
</dbReference>
<dbReference type="GO" id="GO:0005829">
    <property type="term" value="C:cytosol"/>
    <property type="evidence" value="ECO:0007669"/>
    <property type="project" value="TreeGrafter"/>
</dbReference>
<dbReference type="GO" id="GO:0043531">
    <property type="term" value="F:ADP binding"/>
    <property type="evidence" value="ECO:0007669"/>
    <property type="project" value="TreeGrafter"/>
</dbReference>
<dbReference type="GO" id="GO:0005524">
    <property type="term" value="F:ATP binding"/>
    <property type="evidence" value="ECO:0007669"/>
    <property type="project" value="UniProtKB-KW"/>
</dbReference>
<dbReference type="GO" id="GO:0004618">
    <property type="term" value="F:phosphoglycerate kinase activity"/>
    <property type="evidence" value="ECO:0007669"/>
    <property type="project" value="UniProtKB-UniRule"/>
</dbReference>
<dbReference type="GO" id="GO:0006094">
    <property type="term" value="P:gluconeogenesis"/>
    <property type="evidence" value="ECO:0007669"/>
    <property type="project" value="TreeGrafter"/>
</dbReference>
<dbReference type="GO" id="GO:0006096">
    <property type="term" value="P:glycolytic process"/>
    <property type="evidence" value="ECO:0007669"/>
    <property type="project" value="UniProtKB-UniRule"/>
</dbReference>
<dbReference type="CDD" id="cd00318">
    <property type="entry name" value="Phosphoglycerate_kinase"/>
    <property type="match status" value="1"/>
</dbReference>
<dbReference type="FunFam" id="3.40.50.1260:FF:000003">
    <property type="entry name" value="Phosphoglycerate kinase"/>
    <property type="match status" value="1"/>
</dbReference>
<dbReference type="FunFam" id="3.40.50.1260:FF:000006">
    <property type="entry name" value="Phosphoglycerate kinase"/>
    <property type="match status" value="1"/>
</dbReference>
<dbReference type="Gene3D" id="3.40.50.1260">
    <property type="entry name" value="Phosphoglycerate kinase, N-terminal domain"/>
    <property type="match status" value="2"/>
</dbReference>
<dbReference type="HAMAP" id="MF_00145">
    <property type="entry name" value="Phosphoglyc_kinase"/>
    <property type="match status" value="1"/>
</dbReference>
<dbReference type="InterPro" id="IPR001576">
    <property type="entry name" value="Phosphoglycerate_kinase"/>
</dbReference>
<dbReference type="InterPro" id="IPR015911">
    <property type="entry name" value="Phosphoglycerate_kinase_CS"/>
</dbReference>
<dbReference type="InterPro" id="IPR015824">
    <property type="entry name" value="Phosphoglycerate_kinase_N"/>
</dbReference>
<dbReference type="InterPro" id="IPR036043">
    <property type="entry name" value="Phosphoglycerate_kinase_sf"/>
</dbReference>
<dbReference type="PANTHER" id="PTHR11406">
    <property type="entry name" value="PHOSPHOGLYCERATE KINASE"/>
    <property type="match status" value="1"/>
</dbReference>
<dbReference type="PANTHER" id="PTHR11406:SF23">
    <property type="entry name" value="PHOSPHOGLYCERATE KINASE 1, CHLOROPLASTIC-RELATED"/>
    <property type="match status" value="1"/>
</dbReference>
<dbReference type="Pfam" id="PF00162">
    <property type="entry name" value="PGK"/>
    <property type="match status" value="1"/>
</dbReference>
<dbReference type="PIRSF" id="PIRSF000724">
    <property type="entry name" value="Pgk"/>
    <property type="match status" value="1"/>
</dbReference>
<dbReference type="PRINTS" id="PR00477">
    <property type="entry name" value="PHGLYCKINASE"/>
</dbReference>
<dbReference type="SUPFAM" id="SSF53748">
    <property type="entry name" value="Phosphoglycerate kinase"/>
    <property type="match status" value="1"/>
</dbReference>
<dbReference type="PROSITE" id="PS00111">
    <property type="entry name" value="PGLYCERATE_KINASE"/>
    <property type="match status" value="1"/>
</dbReference>
<protein>
    <recommendedName>
        <fullName evidence="1">Phosphoglycerate kinase</fullName>
        <ecNumber evidence="1">2.7.2.3</ecNumber>
    </recommendedName>
</protein>
<evidence type="ECO:0000255" key="1">
    <source>
        <dbReference type="HAMAP-Rule" id="MF_00145"/>
    </source>
</evidence>